<protein>
    <recommendedName>
        <fullName evidence="1">Argininosuccinate lyase</fullName>
        <shortName evidence="1">ASAL</shortName>
        <ecNumber evidence="1">4.3.2.1</ecNumber>
    </recommendedName>
    <alternativeName>
        <fullName evidence="1">Arginosuccinase</fullName>
    </alternativeName>
</protein>
<organism>
    <name type="scientific">Rhodococcus jostii (strain RHA1)</name>
    <dbReference type="NCBI Taxonomy" id="101510"/>
    <lineage>
        <taxon>Bacteria</taxon>
        <taxon>Bacillati</taxon>
        <taxon>Actinomycetota</taxon>
        <taxon>Actinomycetes</taxon>
        <taxon>Mycobacteriales</taxon>
        <taxon>Nocardiaceae</taxon>
        <taxon>Rhodococcus</taxon>
    </lineage>
</organism>
<feature type="chain" id="PRO_0000321449" description="Argininosuccinate lyase">
    <location>
        <begin position="1"/>
        <end position="472"/>
    </location>
</feature>
<evidence type="ECO:0000255" key="1">
    <source>
        <dbReference type="HAMAP-Rule" id="MF_00006"/>
    </source>
</evidence>
<name>ARLY_RHOJR</name>
<proteinExistence type="inferred from homology"/>
<sequence>MSAHGTNEGALWGGRFESGPAAAMAALSKSTHFDWVLAPYDVRASQAHARVLHKAGLLGDEDLASMLDGLGRLAADVASGEFVPSESDEDVHGALERGLIDRVGPEVGGRLRAGRSRNDQVATLFRMWLRDAVRRVAAGVLDVVDALATQAAAHPSAVMPGKTHLQAAQPVLLAHHLLAHTHPLLRDVQRLRDFDVRAAVSPYGSGALAGSSLGLDPEAIAAELDFDSSAENSIDATSSRDFAAEAAFVLAMIGVDLSRMAEEVILWSTPEFGYITLADAWSTGSSIMPQKKNPDVSELTRGKSGRLIGNLTGLLATLKAQPLAYNRDLQEDKEPVFDSVAQLELLLPAITGLVSTLEFHTDRMAELAPAGFTLATDIAEWLVRQGVPFRVAHEAAGACVRVAEARGVGLEDLTDDELAGVDPALTPDVREVLTVEGSIASRNARGGTAGIRVAEQLGGVRQLSESLREWCR</sequence>
<dbReference type="EC" id="4.3.2.1" evidence="1"/>
<dbReference type="EMBL" id="CP000431">
    <property type="protein sequence ID" value="ABG92777.1"/>
    <property type="molecule type" value="Genomic_DNA"/>
</dbReference>
<dbReference type="RefSeq" id="WP_011594141.1">
    <property type="nucleotide sequence ID" value="NC_008268.1"/>
</dbReference>
<dbReference type="SMR" id="Q0SI59"/>
<dbReference type="KEGG" id="rha:RHA1_ro00949"/>
<dbReference type="PATRIC" id="fig|101510.16.peg.968"/>
<dbReference type="eggNOG" id="COG0165">
    <property type="taxonomic scope" value="Bacteria"/>
</dbReference>
<dbReference type="HOGENOM" id="CLU_027272_2_2_11"/>
<dbReference type="OrthoDB" id="9769623at2"/>
<dbReference type="UniPathway" id="UPA00068">
    <property type="reaction ID" value="UER00114"/>
</dbReference>
<dbReference type="Proteomes" id="UP000008710">
    <property type="component" value="Chromosome"/>
</dbReference>
<dbReference type="GO" id="GO:0005829">
    <property type="term" value="C:cytosol"/>
    <property type="evidence" value="ECO:0007669"/>
    <property type="project" value="TreeGrafter"/>
</dbReference>
<dbReference type="GO" id="GO:0004056">
    <property type="term" value="F:argininosuccinate lyase activity"/>
    <property type="evidence" value="ECO:0007669"/>
    <property type="project" value="UniProtKB-UniRule"/>
</dbReference>
<dbReference type="GO" id="GO:0042450">
    <property type="term" value="P:arginine biosynthetic process via ornithine"/>
    <property type="evidence" value="ECO:0007669"/>
    <property type="project" value="InterPro"/>
</dbReference>
<dbReference type="GO" id="GO:0006526">
    <property type="term" value="P:L-arginine biosynthetic process"/>
    <property type="evidence" value="ECO:0007669"/>
    <property type="project" value="UniProtKB-UniRule"/>
</dbReference>
<dbReference type="CDD" id="cd01359">
    <property type="entry name" value="Argininosuccinate_lyase"/>
    <property type="match status" value="1"/>
</dbReference>
<dbReference type="FunFam" id="1.10.40.30:FF:000001">
    <property type="entry name" value="Argininosuccinate lyase"/>
    <property type="match status" value="1"/>
</dbReference>
<dbReference type="FunFam" id="1.20.200.10:FF:000015">
    <property type="entry name" value="argininosuccinate lyase isoform X2"/>
    <property type="match status" value="1"/>
</dbReference>
<dbReference type="Gene3D" id="1.10.40.30">
    <property type="entry name" value="Fumarase/aspartase (C-terminal domain)"/>
    <property type="match status" value="1"/>
</dbReference>
<dbReference type="Gene3D" id="1.20.200.10">
    <property type="entry name" value="Fumarase/aspartase (Central domain)"/>
    <property type="match status" value="1"/>
</dbReference>
<dbReference type="Gene3D" id="1.10.275.10">
    <property type="entry name" value="Fumarase/aspartase (N-terminal domain)"/>
    <property type="match status" value="1"/>
</dbReference>
<dbReference type="HAMAP" id="MF_00006">
    <property type="entry name" value="Arg_succ_lyase"/>
    <property type="match status" value="1"/>
</dbReference>
<dbReference type="InterPro" id="IPR029419">
    <property type="entry name" value="Arg_succ_lyase_C"/>
</dbReference>
<dbReference type="InterPro" id="IPR009049">
    <property type="entry name" value="Argininosuccinate_lyase"/>
</dbReference>
<dbReference type="InterPro" id="IPR024083">
    <property type="entry name" value="Fumarase/histidase_N"/>
</dbReference>
<dbReference type="InterPro" id="IPR020557">
    <property type="entry name" value="Fumarate_lyase_CS"/>
</dbReference>
<dbReference type="InterPro" id="IPR000362">
    <property type="entry name" value="Fumarate_lyase_fam"/>
</dbReference>
<dbReference type="InterPro" id="IPR022761">
    <property type="entry name" value="Fumarate_lyase_N"/>
</dbReference>
<dbReference type="InterPro" id="IPR008948">
    <property type="entry name" value="L-Aspartase-like"/>
</dbReference>
<dbReference type="NCBIfam" id="TIGR00838">
    <property type="entry name" value="argH"/>
    <property type="match status" value="1"/>
</dbReference>
<dbReference type="PANTHER" id="PTHR43814">
    <property type="entry name" value="ARGININOSUCCINATE LYASE"/>
    <property type="match status" value="1"/>
</dbReference>
<dbReference type="PANTHER" id="PTHR43814:SF1">
    <property type="entry name" value="ARGININOSUCCINATE LYASE"/>
    <property type="match status" value="1"/>
</dbReference>
<dbReference type="Pfam" id="PF14698">
    <property type="entry name" value="ASL_C2"/>
    <property type="match status" value="1"/>
</dbReference>
<dbReference type="Pfam" id="PF00206">
    <property type="entry name" value="Lyase_1"/>
    <property type="match status" value="1"/>
</dbReference>
<dbReference type="PRINTS" id="PR00145">
    <property type="entry name" value="ARGSUCLYASE"/>
</dbReference>
<dbReference type="PRINTS" id="PR00149">
    <property type="entry name" value="FUMRATELYASE"/>
</dbReference>
<dbReference type="SUPFAM" id="SSF48557">
    <property type="entry name" value="L-aspartase-like"/>
    <property type="match status" value="1"/>
</dbReference>
<dbReference type="PROSITE" id="PS00163">
    <property type="entry name" value="FUMARATE_LYASES"/>
    <property type="match status" value="1"/>
</dbReference>
<gene>
    <name evidence="1" type="primary">argH</name>
    <name type="ordered locus">RHA1_ro00949</name>
</gene>
<comment type="catalytic activity">
    <reaction evidence="1">
        <text>2-(N(omega)-L-arginino)succinate = fumarate + L-arginine</text>
        <dbReference type="Rhea" id="RHEA:24020"/>
        <dbReference type="ChEBI" id="CHEBI:29806"/>
        <dbReference type="ChEBI" id="CHEBI:32682"/>
        <dbReference type="ChEBI" id="CHEBI:57472"/>
        <dbReference type="EC" id="4.3.2.1"/>
    </reaction>
</comment>
<comment type="pathway">
    <text evidence="1">Amino-acid biosynthesis; L-arginine biosynthesis; L-arginine from L-ornithine and carbamoyl phosphate: step 3/3.</text>
</comment>
<comment type="subcellular location">
    <subcellularLocation>
        <location evidence="1">Cytoplasm</location>
    </subcellularLocation>
</comment>
<comment type="similarity">
    <text evidence="1">Belongs to the lyase 1 family. Argininosuccinate lyase subfamily.</text>
</comment>
<keyword id="KW-0028">Amino-acid biosynthesis</keyword>
<keyword id="KW-0055">Arginine biosynthesis</keyword>
<keyword id="KW-0963">Cytoplasm</keyword>
<keyword id="KW-0456">Lyase</keyword>
<reference key="1">
    <citation type="journal article" date="2006" name="Proc. Natl. Acad. Sci. U.S.A.">
        <title>The complete genome of Rhodococcus sp. RHA1 provides insights into a catabolic powerhouse.</title>
        <authorList>
            <person name="McLeod M.P."/>
            <person name="Warren R.L."/>
            <person name="Hsiao W.W.L."/>
            <person name="Araki N."/>
            <person name="Myhre M."/>
            <person name="Fernandes C."/>
            <person name="Miyazawa D."/>
            <person name="Wong W."/>
            <person name="Lillquist A.L."/>
            <person name="Wang D."/>
            <person name="Dosanjh M."/>
            <person name="Hara H."/>
            <person name="Petrescu A."/>
            <person name="Morin R.D."/>
            <person name="Yang G."/>
            <person name="Stott J.M."/>
            <person name="Schein J.E."/>
            <person name="Shin H."/>
            <person name="Smailus D."/>
            <person name="Siddiqui A.S."/>
            <person name="Marra M.A."/>
            <person name="Jones S.J.M."/>
            <person name="Holt R."/>
            <person name="Brinkman F.S.L."/>
            <person name="Miyauchi K."/>
            <person name="Fukuda M."/>
            <person name="Davies J.E."/>
            <person name="Mohn W.W."/>
            <person name="Eltis L.D."/>
        </authorList>
    </citation>
    <scope>NUCLEOTIDE SEQUENCE [LARGE SCALE GENOMIC DNA]</scope>
    <source>
        <strain>RHA1</strain>
    </source>
</reference>
<accession>Q0SI59</accession>